<protein>
    <recommendedName>
        <fullName>Adenylate cyclase, terminal-differentiation specific</fullName>
        <shortName evidence="12">ACR</shortName>
        <ecNumber evidence="8">4.6.1.1</ecNumber>
    </recommendedName>
    <alternativeName>
        <fullName>ACB</fullName>
    </alternativeName>
    <alternativeName>
        <fullName>ATP pyrophosphate-lyase</fullName>
    </alternativeName>
    <alternativeName>
        <fullName>Adenylyl cyclase</fullName>
    </alternativeName>
</protein>
<dbReference type="EC" id="4.6.1.1" evidence="8"/>
<dbReference type="EMBL" id="AF153362">
    <property type="protein sequence ID" value="AAD50121.1"/>
    <property type="molecule type" value="Genomic_DNA"/>
</dbReference>
<dbReference type="EMBL" id="AAFI02000003">
    <property type="protein sequence ID" value="EAL73140.1"/>
    <property type="molecule type" value="Genomic_DNA"/>
</dbReference>
<dbReference type="RefSeq" id="XP_647665.1">
    <property type="nucleotide sequence ID" value="XM_642573.1"/>
</dbReference>
<dbReference type="SMR" id="Q55F68"/>
<dbReference type="FunCoup" id="Q55F68">
    <property type="interactions" value="35"/>
</dbReference>
<dbReference type="STRING" id="44689.Q55F68"/>
<dbReference type="PaxDb" id="44689-DDB0191294"/>
<dbReference type="EnsemblProtists" id="EAL73140">
    <property type="protein sequence ID" value="EAL73140"/>
    <property type="gene ID" value="DDB_G0267376"/>
</dbReference>
<dbReference type="GeneID" id="8616482"/>
<dbReference type="KEGG" id="ddi:DDB_G0267376"/>
<dbReference type="dictyBase" id="DDB_G0267376">
    <property type="gene designation" value="acrA"/>
</dbReference>
<dbReference type="VEuPathDB" id="AmoebaDB:DDB_G0267376"/>
<dbReference type="eggNOG" id="ENOG502RSS4">
    <property type="taxonomic scope" value="Eukaryota"/>
</dbReference>
<dbReference type="HOGENOM" id="CLU_232101_0_0_1"/>
<dbReference type="InParanoid" id="Q55F68"/>
<dbReference type="OMA" id="PIMRVLI"/>
<dbReference type="PRO" id="PR:Q55F68"/>
<dbReference type="Proteomes" id="UP000002195">
    <property type="component" value="Chromosome 1"/>
</dbReference>
<dbReference type="GO" id="GO:0005783">
    <property type="term" value="C:endoplasmic reticulum"/>
    <property type="evidence" value="ECO:0000314"/>
    <property type="project" value="dictyBase"/>
</dbReference>
<dbReference type="GO" id="GO:0016020">
    <property type="term" value="C:membrane"/>
    <property type="evidence" value="ECO:0007669"/>
    <property type="project" value="UniProtKB-SubCell"/>
</dbReference>
<dbReference type="GO" id="GO:0005635">
    <property type="term" value="C:nuclear envelope"/>
    <property type="evidence" value="ECO:0000314"/>
    <property type="project" value="dictyBase"/>
</dbReference>
<dbReference type="GO" id="GO:0004016">
    <property type="term" value="F:adenylate cyclase activity"/>
    <property type="evidence" value="ECO:0000314"/>
    <property type="project" value="dictyBase"/>
</dbReference>
<dbReference type="GO" id="GO:0005524">
    <property type="term" value="F:ATP binding"/>
    <property type="evidence" value="ECO:0000305"/>
    <property type="project" value="dictyBase"/>
</dbReference>
<dbReference type="GO" id="GO:0046872">
    <property type="term" value="F:metal ion binding"/>
    <property type="evidence" value="ECO:0007669"/>
    <property type="project" value="UniProtKB-KW"/>
</dbReference>
<dbReference type="GO" id="GO:0016772">
    <property type="term" value="F:transferase activity, transferring phosphorus-containing groups"/>
    <property type="evidence" value="ECO:0007669"/>
    <property type="project" value="InterPro"/>
</dbReference>
<dbReference type="GO" id="GO:0006171">
    <property type="term" value="P:cAMP biosynthetic process"/>
    <property type="evidence" value="ECO:0007669"/>
    <property type="project" value="UniProtKB-KW"/>
</dbReference>
<dbReference type="GO" id="GO:0019933">
    <property type="term" value="P:cAMP-mediated signaling"/>
    <property type="evidence" value="ECO:0000314"/>
    <property type="project" value="dictyBase"/>
</dbReference>
<dbReference type="GO" id="GO:0009736">
    <property type="term" value="P:cytokinin-activated signaling pathway"/>
    <property type="evidence" value="ECO:0000315"/>
    <property type="project" value="dictyBase"/>
</dbReference>
<dbReference type="GO" id="GO:0000160">
    <property type="term" value="P:phosphorelay signal transduction system"/>
    <property type="evidence" value="ECO:0007669"/>
    <property type="project" value="InterPro"/>
</dbReference>
<dbReference type="GO" id="GO:0010468">
    <property type="term" value="P:regulation of gene expression"/>
    <property type="evidence" value="ECO:0000315"/>
    <property type="project" value="dictyBase"/>
</dbReference>
<dbReference type="GO" id="GO:0031000">
    <property type="term" value="P:response to caffeine"/>
    <property type="evidence" value="ECO:0000314"/>
    <property type="project" value="dictyBase"/>
</dbReference>
<dbReference type="GO" id="GO:0030587">
    <property type="term" value="P:sorocarp development"/>
    <property type="evidence" value="ECO:0007001"/>
    <property type="project" value="dictyBase"/>
</dbReference>
<dbReference type="GO" id="GO:0031288">
    <property type="term" value="P:sorocarp morphogenesis"/>
    <property type="evidence" value="ECO:0000315"/>
    <property type="project" value="dictyBase"/>
</dbReference>
<dbReference type="GO" id="GO:0044671">
    <property type="term" value="P:sorocarp spore cell differentiation"/>
    <property type="evidence" value="ECO:0000315"/>
    <property type="project" value="dictyBase"/>
</dbReference>
<dbReference type="GO" id="GO:0030435">
    <property type="term" value="P:sporulation resulting in formation of a cellular spore"/>
    <property type="evidence" value="ECO:0007669"/>
    <property type="project" value="UniProtKB-KW"/>
</dbReference>
<dbReference type="CDD" id="cd07302">
    <property type="entry name" value="CHD"/>
    <property type="match status" value="1"/>
</dbReference>
<dbReference type="CDD" id="cd00156">
    <property type="entry name" value="REC"/>
    <property type="match status" value="1"/>
</dbReference>
<dbReference type="FunFam" id="3.40.50.2300:FF:000663">
    <property type="entry name" value="Response regulator receiver"/>
    <property type="match status" value="1"/>
</dbReference>
<dbReference type="Gene3D" id="3.40.50.2300">
    <property type="match status" value="2"/>
</dbReference>
<dbReference type="Gene3D" id="3.30.565.10">
    <property type="entry name" value="Histidine kinase-like ATPase, C-terminal domain"/>
    <property type="match status" value="1"/>
</dbReference>
<dbReference type="Gene3D" id="3.30.70.1230">
    <property type="entry name" value="Nucleotide cyclase"/>
    <property type="match status" value="1"/>
</dbReference>
<dbReference type="InterPro" id="IPR001054">
    <property type="entry name" value="A/G_cyclase"/>
</dbReference>
<dbReference type="InterPro" id="IPR050697">
    <property type="entry name" value="Adenylyl/Guanylyl_Cyclase_3/4"/>
</dbReference>
<dbReference type="InterPro" id="IPR011006">
    <property type="entry name" value="CheY-like_superfamily"/>
</dbReference>
<dbReference type="InterPro" id="IPR036890">
    <property type="entry name" value="HATPase_C_sf"/>
</dbReference>
<dbReference type="InterPro" id="IPR005467">
    <property type="entry name" value="His_kinase_dom"/>
</dbReference>
<dbReference type="InterPro" id="IPR029787">
    <property type="entry name" value="Nucleotide_cyclase"/>
</dbReference>
<dbReference type="InterPro" id="IPR004358">
    <property type="entry name" value="Sig_transdc_His_kin-like_C"/>
</dbReference>
<dbReference type="InterPro" id="IPR001789">
    <property type="entry name" value="Sig_transdc_resp-reg_receiver"/>
</dbReference>
<dbReference type="PANTHER" id="PTHR43081:SF1">
    <property type="entry name" value="ADENYLATE CYCLASE, TERMINAL-DIFFERENTIATION SPECIFIC"/>
    <property type="match status" value="1"/>
</dbReference>
<dbReference type="PANTHER" id="PTHR43081">
    <property type="entry name" value="ADENYLATE CYCLASE, TERMINAL-DIFFERENTIATION SPECIFIC-RELATED"/>
    <property type="match status" value="1"/>
</dbReference>
<dbReference type="Pfam" id="PF00211">
    <property type="entry name" value="Guanylate_cyc"/>
    <property type="match status" value="1"/>
</dbReference>
<dbReference type="Pfam" id="PF02518">
    <property type="entry name" value="HATPase_c"/>
    <property type="match status" value="1"/>
</dbReference>
<dbReference type="Pfam" id="PF00072">
    <property type="entry name" value="Response_reg"/>
    <property type="match status" value="1"/>
</dbReference>
<dbReference type="PRINTS" id="PR00344">
    <property type="entry name" value="BCTRLSENSOR"/>
</dbReference>
<dbReference type="SMART" id="SM00044">
    <property type="entry name" value="CYCc"/>
    <property type="match status" value="1"/>
</dbReference>
<dbReference type="SMART" id="SM00387">
    <property type="entry name" value="HATPase_c"/>
    <property type="match status" value="1"/>
</dbReference>
<dbReference type="SMART" id="SM00448">
    <property type="entry name" value="REC"/>
    <property type="match status" value="2"/>
</dbReference>
<dbReference type="SUPFAM" id="SSF55874">
    <property type="entry name" value="ATPase domain of HSP90 chaperone/DNA topoisomerase II/histidine kinase"/>
    <property type="match status" value="1"/>
</dbReference>
<dbReference type="SUPFAM" id="SSF52172">
    <property type="entry name" value="CheY-like"/>
    <property type="match status" value="2"/>
</dbReference>
<dbReference type="SUPFAM" id="SSF55073">
    <property type="entry name" value="Nucleotide cyclase"/>
    <property type="match status" value="1"/>
</dbReference>
<dbReference type="PROSITE" id="PS50125">
    <property type="entry name" value="GUANYLATE_CYCLASE_2"/>
    <property type="match status" value="1"/>
</dbReference>
<dbReference type="PROSITE" id="PS50109">
    <property type="entry name" value="HIS_KIN"/>
    <property type="match status" value="1"/>
</dbReference>
<dbReference type="PROSITE" id="PS50110">
    <property type="entry name" value="RESPONSE_REGULATORY"/>
    <property type="match status" value="2"/>
</dbReference>
<feature type="chain" id="PRO_0000328240" description="Adenylate cyclase, terminal-differentiation specific">
    <location>
        <begin position="1"/>
        <end position="2123"/>
    </location>
</feature>
<feature type="transmembrane region" description="Helical" evidence="2">
    <location>
        <begin position="246"/>
        <end position="266"/>
    </location>
</feature>
<feature type="transmembrane region" description="Helical" evidence="2">
    <location>
        <begin position="279"/>
        <end position="299"/>
    </location>
</feature>
<feature type="transmembrane region" description="Helical" evidence="2">
    <location>
        <begin position="305"/>
        <end position="325"/>
    </location>
</feature>
<feature type="transmembrane region" description="Helical" evidence="2">
    <location>
        <begin position="328"/>
        <end position="348"/>
    </location>
</feature>
<feature type="transmembrane region" description="Helical" evidence="2">
    <location>
        <begin position="403"/>
        <end position="423"/>
    </location>
</feature>
<feature type="transmembrane region" description="Helical" evidence="2">
    <location>
        <begin position="502"/>
        <end position="522"/>
    </location>
</feature>
<feature type="transmembrane region" description="Helical" evidence="2">
    <location>
        <begin position="572"/>
        <end position="592"/>
    </location>
</feature>
<feature type="domain" description="Histidine kinase" evidence="4">
    <location>
        <begin position="654"/>
        <end position="928"/>
    </location>
</feature>
<feature type="domain" description="Response regulatory 1" evidence="5">
    <location>
        <begin position="954"/>
        <end position="1076"/>
    </location>
</feature>
<feature type="domain" description="Response regulatory 2" evidence="5">
    <location>
        <begin position="1125"/>
        <end position="1310"/>
    </location>
</feature>
<feature type="domain" description="Guanylate cyclase" evidence="3">
    <location>
        <begin position="1583"/>
        <end position="1712"/>
    </location>
</feature>
<feature type="region of interest" description="Disordered" evidence="6">
    <location>
        <begin position="1"/>
        <end position="167"/>
    </location>
</feature>
<feature type="region of interest" description="Disordered" evidence="6">
    <location>
        <begin position="358"/>
        <end position="382"/>
    </location>
</feature>
<feature type="region of interest" description="Disordered" evidence="6">
    <location>
        <begin position="441"/>
        <end position="461"/>
    </location>
</feature>
<feature type="region of interest" description="Disordered" evidence="6">
    <location>
        <begin position="793"/>
        <end position="841"/>
    </location>
</feature>
<feature type="region of interest" description="Disordered" evidence="6">
    <location>
        <begin position="1207"/>
        <end position="1301"/>
    </location>
</feature>
<feature type="region of interest" description="Disordered" evidence="6">
    <location>
        <begin position="1428"/>
        <end position="1473"/>
    </location>
</feature>
<feature type="region of interest" description="Disordered" evidence="6">
    <location>
        <begin position="1492"/>
        <end position="1540"/>
    </location>
</feature>
<feature type="region of interest" description="Disordered" evidence="6">
    <location>
        <begin position="1963"/>
        <end position="1990"/>
    </location>
</feature>
<feature type="region of interest" description="Disordered" evidence="6">
    <location>
        <begin position="2039"/>
        <end position="2123"/>
    </location>
</feature>
<feature type="compositionally biased region" description="Basic residues" evidence="6">
    <location>
        <begin position="1"/>
        <end position="13"/>
    </location>
</feature>
<feature type="compositionally biased region" description="Low complexity" evidence="6">
    <location>
        <begin position="40"/>
        <end position="111"/>
    </location>
</feature>
<feature type="compositionally biased region" description="Low complexity" evidence="6">
    <location>
        <begin position="118"/>
        <end position="133"/>
    </location>
</feature>
<feature type="compositionally biased region" description="Low complexity" evidence="6">
    <location>
        <begin position="157"/>
        <end position="167"/>
    </location>
</feature>
<feature type="compositionally biased region" description="Low complexity" evidence="6">
    <location>
        <begin position="358"/>
        <end position="381"/>
    </location>
</feature>
<feature type="compositionally biased region" description="Low complexity" evidence="6">
    <location>
        <begin position="793"/>
        <end position="802"/>
    </location>
</feature>
<feature type="compositionally biased region" description="Low complexity" evidence="6">
    <location>
        <begin position="830"/>
        <end position="841"/>
    </location>
</feature>
<feature type="compositionally biased region" description="Low complexity" evidence="6">
    <location>
        <begin position="1212"/>
        <end position="1257"/>
    </location>
</feature>
<feature type="compositionally biased region" description="Low complexity" evidence="6">
    <location>
        <begin position="1273"/>
        <end position="1288"/>
    </location>
</feature>
<feature type="compositionally biased region" description="Polar residues" evidence="6">
    <location>
        <begin position="1289"/>
        <end position="1301"/>
    </location>
</feature>
<feature type="compositionally biased region" description="Low complexity" evidence="6">
    <location>
        <begin position="1428"/>
        <end position="1453"/>
    </location>
</feature>
<feature type="compositionally biased region" description="Low complexity" evidence="6">
    <location>
        <begin position="1492"/>
        <end position="1508"/>
    </location>
</feature>
<feature type="compositionally biased region" description="Polar residues" evidence="6">
    <location>
        <begin position="1525"/>
        <end position="1539"/>
    </location>
</feature>
<feature type="compositionally biased region" description="Low complexity" evidence="6">
    <location>
        <begin position="2053"/>
        <end position="2111"/>
    </location>
</feature>
<feature type="compositionally biased region" description="Polar residues" evidence="6">
    <location>
        <begin position="2112"/>
        <end position="2123"/>
    </location>
</feature>
<feature type="binding site" evidence="3">
    <location>
        <position position="1588"/>
    </location>
    <ligand>
        <name>Mg(2+)</name>
        <dbReference type="ChEBI" id="CHEBI:18420"/>
        <label>1</label>
    </ligand>
</feature>
<feature type="binding site" evidence="3">
    <location>
        <position position="1588"/>
    </location>
    <ligand>
        <name>Mg(2+)</name>
        <dbReference type="ChEBI" id="CHEBI:18420"/>
        <label>2</label>
    </ligand>
</feature>
<feature type="binding site" evidence="3">
    <location>
        <position position="1589"/>
    </location>
    <ligand>
        <name>Mg(2+)</name>
        <dbReference type="ChEBI" id="CHEBI:18420"/>
        <label>2</label>
    </ligand>
</feature>
<feature type="binding site" evidence="3">
    <location>
        <position position="1632"/>
    </location>
    <ligand>
        <name>Mg(2+)</name>
        <dbReference type="ChEBI" id="CHEBI:18420"/>
        <label>1</label>
    </ligand>
</feature>
<feature type="binding site" evidence="3">
    <location>
        <position position="1632"/>
    </location>
    <ligand>
        <name>Mg(2+)</name>
        <dbReference type="ChEBI" id="CHEBI:18420"/>
        <label>2</label>
    </ligand>
</feature>
<feature type="modified residue" description="4-aspartylphosphate" evidence="5">
    <location>
        <position position="1010"/>
    </location>
</feature>
<feature type="modified residue" description="4-aspartylphosphate" evidence="5">
    <location>
        <position position="1174"/>
    </location>
</feature>
<feature type="sequence conflict" description="In Ref. 1; AAD50121." evidence="13" ref="1">
    <original>Q</original>
    <variation>R</variation>
    <location>
        <position position="1936"/>
    </location>
</feature>
<organism>
    <name type="scientific">Dictyostelium discoideum</name>
    <name type="common">Social amoeba</name>
    <dbReference type="NCBI Taxonomy" id="44689"/>
    <lineage>
        <taxon>Eukaryota</taxon>
        <taxon>Amoebozoa</taxon>
        <taxon>Evosea</taxon>
        <taxon>Eumycetozoa</taxon>
        <taxon>Dictyostelia</taxon>
        <taxon>Dictyosteliales</taxon>
        <taxon>Dictyosteliaceae</taxon>
        <taxon>Dictyostelium</taxon>
    </lineage>
</organism>
<keyword id="KW-0067">ATP-binding</keyword>
<keyword id="KW-0115">cAMP biosynthesis</keyword>
<keyword id="KW-0456">Lyase</keyword>
<keyword id="KW-0460">Magnesium</keyword>
<keyword id="KW-0472">Membrane</keyword>
<keyword id="KW-0479">Metal-binding</keyword>
<keyword id="KW-0547">Nucleotide-binding</keyword>
<keyword id="KW-0597">Phosphoprotein</keyword>
<keyword id="KW-1185">Reference proteome</keyword>
<keyword id="KW-0677">Repeat</keyword>
<keyword id="KW-0749">Sporulation</keyword>
<keyword id="KW-0812">Transmembrane</keyword>
<keyword id="KW-1133">Transmembrane helix</keyword>
<accession>Q55F68</accession>
<accession>Q9U9S7</accession>
<proteinExistence type="evidence at protein level"/>
<evidence type="ECO:0000250" key="1"/>
<evidence type="ECO:0000255" key="2"/>
<evidence type="ECO:0000255" key="3">
    <source>
        <dbReference type="PROSITE-ProRule" id="PRU00099"/>
    </source>
</evidence>
<evidence type="ECO:0000255" key="4">
    <source>
        <dbReference type="PROSITE-ProRule" id="PRU00107"/>
    </source>
</evidence>
<evidence type="ECO:0000255" key="5">
    <source>
        <dbReference type="PROSITE-ProRule" id="PRU00169"/>
    </source>
</evidence>
<evidence type="ECO:0000256" key="6">
    <source>
        <dbReference type="SAM" id="MobiDB-lite"/>
    </source>
</evidence>
<evidence type="ECO:0000269" key="7">
    <source>
    </source>
</evidence>
<evidence type="ECO:0000269" key="8">
    <source>
    </source>
</evidence>
<evidence type="ECO:0000269" key="9">
    <source>
    </source>
</evidence>
<evidence type="ECO:0000269" key="10">
    <source>
    </source>
</evidence>
<evidence type="ECO:0000269" key="11">
    <source>
    </source>
</evidence>
<evidence type="ECO:0000303" key="12">
    <source>
    </source>
</evidence>
<evidence type="ECO:0000305" key="13"/>
<evidence type="ECO:0000305" key="14">
    <source>
    </source>
</evidence>
<gene>
    <name type="primary">acrA</name>
    <name type="synonym">acb</name>
    <name type="ORF">DDB_G0267376</name>
</gene>
<reference key="1">
    <citation type="journal article" date="1999" name="Development">
        <title>An adenylyl cyclase that functions during late development of Dictyostelium.</title>
        <authorList>
            <person name="Soederbom F."/>
            <person name="Anjard C."/>
            <person name="Iranfar N."/>
            <person name="Fuller D."/>
            <person name="Loomis W.F."/>
        </authorList>
    </citation>
    <scope>NUCLEOTIDE SEQUENCE [GENOMIC DNA]</scope>
    <scope>SUBUNIT</scope>
    <scope>FUNCTION</scope>
    <scope>CATALYTIC ACTIVITY</scope>
    <scope>DEVELOPMENTAL STAGE</scope>
    <scope>COFACTOR</scope>
    <scope>DISRUPTION PHENOTYPE</scope>
    <source>
        <strain>AX4</strain>
    </source>
</reference>
<reference key="2">
    <citation type="journal article" date="2005" name="Nature">
        <title>The genome of the social amoeba Dictyostelium discoideum.</title>
        <authorList>
            <person name="Eichinger L."/>
            <person name="Pachebat J.A."/>
            <person name="Gloeckner G."/>
            <person name="Rajandream M.A."/>
            <person name="Sucgang R."/>
            <person name="Berriman M."/>
            <person name="Song J."/>
            <person name="Olsen R."/>
            <person name="Szafranski K."/>
            <person name="Xu Q."/>
            <person name="Tunggal B."/>
            <person name="Kummerfeld S."/>
            <person name="Madera M."/>
            <person name="Konfortov B.A."/>
            <person name="Rivero F."/>
            <person name="Bankier A.T."/>
            <person name="Lehmann R."/>
            <person name="Hamlin N."/>
            <person name="Davies R."/>
            <person name="Gaudet P."/>
            <person name="Fey P."/>
            <person name="Pilcher K."/>
            <person name="Chen G."/>
            <person name="Saunders D."/>
            <person name="Sodergren E.J."/>
            <person name="Davis P."/>
            <person name="Kerhornou A."/>
            <person name="Nie X."/>
            <person name="Hall N."/>
            <person name="Anjard C."/>
            <person name="Hemphill L."/>
            <person name="Bason N."/>
            <person name="Farbrother P."/>
            <person name="Desany B."/>
            <person name="Just E."/>
            <person name="Morio T."/>
            <person name="Rost R."/>
            <person name="Churcher C.M."/>
            <person name="Cooper J."/>
            <person name="Haydock S."/>
            <person name="van Driessche N."/>
            <person name="Cronin A."/>
            <person name="Goodhead I."/>
            <person name="Muzny D.M."/>
            <person name="Mourier T."/>
            <person name="Pain A."/>
            <person name="Lu M."/>
            <person name="Harper D."/>
            <person name="Lindsay R."/>
            <person name="Hauser H."/>
            <person name="James K.D."/>
            <person name="Quiles M."/>
            <person name="Madan Babu M."/>
            <person name="Saito T."/>
            <person name="Buchrieser C."/>
            <person name="Wardroper A."/>
            <person name="Felder M."/>
            <person name="Thangavelu M."/>
            <person name="Johnson D."/>
            <person name="Knights A."/>
            <person name="Loulseged H."/>
            <person name="Mungall K.L."/>
            <person name="Oliver K."/>
            <person name="Price C."/>
            <person name="Quail M.A."/>
            <person name="Urushihara H."/>
            <person name="Hernandez J."/>
            <person name="Rabbinowitsch E."/>
            <person name="Steffen D."/>
            <person name="Sanders M."/>
            <person name="Ma J."/>
            <person name="Kohara Y."/>
            <person name="Sharp S."/>
            <person name="Simmonds M.N."/>
            <person name="Spiegler S."/>
            <person name="Tivey A."/>
            <person name="Sugano S."/>
            <person name="White B."/>
            <person name="Walker D."/>
            <person name="Woodward J.R."/>
            <person name="Winckler T."/>
            <person name="Tanaka Y."/>
            <person name="Shaulsky G."/>
            <person name="Schleicher M."/>
            <person name="Weinstock G.M."/>
            <person name="Rosenthal A."/>
            <person name="Cox E.C."/>
            <person name="Chisholm R.L."/>
            <person name="Gibbs R.A."/>
            <person name="Loomis W.F."/>
            <person name="Platzer M."/>
            <person name="Kay R.R."/>
            <person name="Williams J.G."/>
            <person name="Dear P.H."/>
            <person name="Noegel A.A."/>
            <person name="Barrell B.G."/>
            <person name="Kuspa A."/>
        </authorList>
    </citation>
    <scope>NUCLEOTIDE SEQUENCE [LARGE SCALE GENOMIC DNA]</scope>
    <source>
        <strain>AX4</strain>
    </source>
</reference>
<reference key="3">
    <citation type="journal article" date="1998" name="J. Biol. Chem.">
        <title>A novel adenylyl cyclase detected in rapidly developing mutants of Dictyostelium.</title>
        <authorList>
            <person name="Kim H.-J."/>
            <person name="Chang W.-T."/>
            <person name="Meima M."/>
            <person name="Gross J.D."/>
            <person name="Schaap P."/>
        </authorList>
    </citation>
    <scope>FUNCTION AS AN ADENYLYL CYCLASE ACTIVITY</scope>
    <source>
        <strain>AX2</strain>
    </source>
</reference>
<reference key="4">
    <citation type="journal article" date="1999" name="Dev. Biol.">
        <title>Fingerprinting of adenylyl cyclase activities during Dictyostelium development indicates a dominant role for adenylyl cyclase B in terminal differentiation.</title>
        <authorList>
            <person name="Meima M.E."/>
            <person name="Schaap P."/>
        </authorList>
    </citation>
    <scope>FUNCTION</scope>
    <scope>DEVELOPMENTAL STAGE</scope>
    <source>
        <strain>NC-4</strain>
    </source>
</reference>
<reference key="5">
    <citation type="journal article" date="2001" name="Development">
        <title>Requirements for the adenylyl cyclases in the development of Dictyostelium.</title>
        <authorList>
            <person name="Anjard C."/>
            <person name="Soederbom F."/>
            <person name="Loomis W.F."/>
        </authorList>
    </citation>
    <scope>FUNCTION</scope>
    <scope>DEVELOPMENTAL STAGE</scope>
    <source>
        <strain>AX4</strain>
    </source>
</reference>
<reference key="6">
    <citation type="journal article" date="2007" name="Biochem. J.">
        <title>Pharmacological profiling of the Dictyostelium adenylate cyclases ACA, ACB and ACG.</title>
        <authorList>
            <person name="Alvarez-Curto E."/>
            <person name="Weening K.E."/>
            <person name="Schaap P."/>
        </authorList>
    </citation>
    <scope>ACTIVITY REGULATION</scope>
    <source>
        <strain>NC-4</strain>
    </source>
</reference>
<name>CYAD_DICDI</name>
<comment type="function">
    <text evidence="7 8 9 11">Through the production of cAMP, activates cAMP-dependent protein kinases (PKAs), triggering terminal differential and the production of spores.</text>
</comment>
<comment type="catalytic activity">
    <reaction evidence="8">
        <text>ATP = 3',5'-cyclic AMP + diphosphate</text>
        <dbReference type="Rhea" id="RHEA:15389"/>
        <dbReference type="ChEBI" id="CHEBI:30616"/>
        <dbReference type="ChEBI" id="CHEBI:33019"/>
        <dbReference type="ChEBI" id="CHEBI:58165"/>
        <dbReference type="EC" id="4.6.1.1"/>
    </reaction>
    <physiologicalReaction direction="left-to-right" evidence="8">
        <dbReference type="Rhea" id="RHEA:15390"/>
    </physiologicalReaction>
</comment>
<comment type="cofactor">
    <cofactor evidence="8">
        <name>Mg(2+)</name>
        <dbReference type="ChEBI" id="CHEBI:18420"/>
    </cofactor>
    <text evidence="1">Binds 2 magnesium ions per subunit.</text>
</comment>
<comment type="activity regulation">
    <text evidence="10">Inhibited by high osmolarity. Inhibited by caffeine and 2',5'-dideoxyadenosine (DDA).</text>
</comment>
<comment type="subunit">
    <text evidence="14">Homodimer.</text>
</comment>
<comment type="subcellular location">
    <subcellularLocation>
        <location evidence="13">Membrane</location>
        <topology evidence="13">Multi-pass membrane protein</topology>
    </subcellularLocation>
</comment>
<comment type="developmental stage">
    <text evidence="7 8 9">Present at low levels in growing cells; accumulates to high levels throughout development (PubMed:10556070). Highly expressed during early culmination and in fruiting bodies, especially in the prestalk region.</text>
</comment>
<comment type="disruption phenotype">
    <text evidence="8">Cells cannot complete sporulation and have abnormally long, thin stalks, though able to aggregate and form normal slugs.</text>
</comment>
<comment type="similarity">
    <text evidence="3">Belongs to the adenylyl cyclase class-4/guanylyl cyclase family.</text>
</comment>
<sequence>MTNNRLKNRKKPNQIHTISEEEEEEEPLFNNEDLQTQHLNSPSSDSISTSSSSSLSSVGGSVVGNNNSNSNGIDNNNSNNNNNNNNNNNNNNNNNNSNNNNNYTGNSIGGNDFKNKASSSSSTPTTSTGIGSSKFPNIKRKNSFSNRYDSGGGGSGSSRSNSFGGSNSSGGASKEFFYFDNDDMIQDDDLIPMLMQDQEHQLQTQYQNQQQVQQQQNIINSFINHENLKFPFSIIYTNKLHIWLSYFLFTFVLIFCCLAVGPLLWIELPPNSGCMWCRIFKLEWVISFMSLISAMFHYTIRRDMFPLYLSIIGFYHVLTYSEPFLEPFRVNNFFSLILTVICIFIAFYPKNKLRRQQASNHHQQQQQQQQQQRQRQQNNNRQPEKSIIKRIIQNEWFHSLIQILIVLGIVVLLFFSIFILALFMKDDKTFSGDVIDGNINSNNNNNNNNNNNINNNNIDNNNNNIKNNNKGFIEEIEQGEEQLELYLENAYHIFKELVFKKFISSSVVYLILITLLFCISLVYHWEVRKPYTLMALASMIPQLTQALYKVELTLTGVMDKGTMSHNVTPLGGGIFYILNVISYTSFYCGLAIDVVVASGEKYKRLKKRGEKYHRRLSTQINEQNAFVNKIYASGTAQLLQKVEFMQKFVDKILFSTLEISNRLQRLESSDQDIPSSLVDQLNDIQYQTNRSLLLLNDTKLILAIESGVISREDVSVNLFDFLEDVLERTSKDIKFNNIELVYKIDKDVPLNIILDPTALTQICFQLLSNAIKYTEEGEIGILIKRILRNDYEYQQEQQQPQQDNELPPFGTISEEDEEYNSNNPPPPLNQQQQQRQQQQQQEPKQIYLEISIFDSGPGMDDDELDICNQFQPFPDIGDEDDIEIKKKGSGLGLLICNKVLKSIGGDLIVERYLETGGCIFKCCIPVLVDPQPKENFTFQIPLSQETNELLSDLSVLVIDDNPYARDSVGFIFSSVFNSAIVKSANSSVEGVRDLKYAIATDSNFKLLLVDYHMPGCDGIEAIQMIVDNPAFSDIKIILMILPSDSFAHMNEKTKNITTLIKPVTPTNLFNAISKTFKLKEFSSVVDLVDLNAPDTSTQIPLKRNRLKFKIDFPFRLPETGKPIMRVLIGESDKSTQSKIQKVIESFGYFSTFVTDGTALISLSKKNYYDLVIVDLELQSTDGFECAQIIRDTHGEIFSNTIFVPKPISTNSNDDNNNNNNNNNNNNNNDNNNNNNNNNNNNNNNNNNNNNNNNNNNNSILTSSVDTDGNHIVSSSTSTSSSFPTRRSSIGSFQTASPSMTEISHRRRVKLPIIGIWHHSDIIPDDIIKKIKRVGFDGYCSFDNLEFYLQEFLLEFDRKRKSNILSPIRLFPNGSPSTNIYDYSSIISNLNQASGNNNNSSPISGILNENVISSPISLDLDLNSVSSIQSQSSSSSSSFQHNNQQQQQQQHQHQLTPTQQSIGGGNNGINQLSFSSQQSTPIFNQSQIQHQIISNRSKHSSLSSSTSSNGSGGSGGKSRFSIPMLPSSTNRDSSPHSSSKMALKRVQDLESVISKFVPIEFQQLIAPSGMENVYLGDAICKSITIFFSDIRDFTSTTEKMLVDDVIDFLNTYLAFALPSITDSGGFIDKFIGDAIMAIFPNSDMKLQAINAVKAAIRMMRSLDFMSISGFRFSSVETGVGINTGKTIIGIVGTENRMEPTALGDAVNLASRTEQLCKEYQSRILITQFTMEAIGTSIDEFVIRLVDSVTVKGKSEAVNIYEVIDGEREDKRVLKMKILPWYQNGMDLYKRHCYEEALSYFQLCTEIMPNDKPTLIYIQRCIQNIKTLELQQIQLQQLQRQQLLQQQQQQLLLQQQLQQQQQQQQQQQQQQQQQQQQQQQQQQQQQQQQQQQQQQQQQQQQQSQNIQQPQSQQSQYVQQPQQQQQQQQQQQQQQQQQQQQQQQQQQQQQQQQQQQPQQQQQLQQQQQHQQQKQPSPQQQQQPQQPQQQQQQQIQNQYQHQLQYQRQQQQQQQQQQQQQQQQQQQQQQQQQQQQQQQQQQQQQQQQQQHHHHHHQQQQFQQQSQQSQQQSQQQQQQQQQQSQQQSQQQSQQIQKKSQHPHSQQIQSQRHQSQPQNVDTNVKTKPQQ</sequence>